<protein>
    <recommendedName>
        <fullName>Virion export protein</fullName>
    </recommendedName>
    <alternativeName>
        <fullName>Gene 4 protein</fullName>
        <shortName>G4P</shortName>
    </alternativeName>
</protein>
<organism>
    <name type="scientific">Enterobacteria phage M13</name>
    <name type="common">Bacteriophage M13</name>
    <dbReference type="NCBI Taxonomy" id="1977402"/>
    <lineage>
        <taxon>Viruses</taxon>
        <taxon>Monodnaviria</taxon>
        <taxon>Loebvirae</taxon>
        <taxon>Hofneiviricota</taxon>
        <taxon>Faserviricetes</taxon>
        <taxon>Tubulavirales</taxon>
        <taxon>Inoviridae</taxon>
        <taxon>Inovirus</taxon>
    </lineage>
</organism>
<evidence type="ECO:0000250" key="1"/>
<evidence type="ECO:0000255" key="2"/>
<evidence type="ECO:0000305" key="3"/>
<gene>
    <name type="primary">IV</name>
</gene>
<keyword id="KW-1043">Host membrane</keyword>
<keyword id="KW-0472">Membrane</keyword>
<keyword id="KW-1185">Reference proteome</keyword>
<keyword id="KW-0732">Signal</keyword>
<keyword id="KW-0812">Transmembrane</keyword>
<keyword id="KW-1133">Transmembrane helix</keyword>
<keyword id="KW-1249">Viral extrusion</keyword>
<keyword id="KW-1188">Viral release from host cell</keyword>
<organismHost>
    <name type="scientific">Escherichia coli</name>
    <dbReference type="NCBI Taxonomy" id="562"/>
</organismHost>
<reference key="1">
    <citation type="journal article" date="1980" name="Gene">
        <title>Nucleotide sequence of the filamentous bacteriophage M13 DNA genome: comparison with phage fd.</title>
        <authorList>
            <person name="van Wezenbeek P.M.G.F."/>
            <person name="Hulsebos T.J.M."/>
            <person name="Schoenmakers J.G.G."/>
        </authorList>
    </citation>
    <scope>NUCLEOTIDE SEQUENCE [GENOMIC DNA]</scope>
</reference>
<dbReference type="EMBL" id="V00604">
    <property type="protein sequence ID" value="CAA23865.1"/>
    <property type="molecule type" value="Genomic_DNA"/>
</dbReference>
<dbReference type="PIR" id="B04268">
    <property type="entry name" value="Z4BPM3"/>
</dbReference>
<dbReference type="RefSeq" id="NP_510894.1">
    <property type="nucleotide sequence ID" value="NC_003287.2"/>
</dbReference>
<dbReference type="SMR" id="P03665"/>
<dbReference type="GeneID" id="927337"/>
<dbReference type="KEGG" id="vg:927337"/>
<dbReference type="OrthoDB" id="9067at10239"/>
<dbReference type="Proteomes" id="UP000002111">
    <property type="component" value="Genome"/>
</dbReference>
<dbReference type="GO" id="GO:0033644">
    <property type="term" value="C:host cell membrane"/>
    <property type="evidence" value="ECO:0007669"/>
    <property type="project" value="UniProtKB-SubCell"/>
</dbReference>
<dbReference type="GO" id="GO:0016020">
    <property type="term" value="C:membrane"/>
    <property type="evidence" value="ECO:0007669"/>
    <property type="project" value="UniProtKB-KW"/>
</dbReference>
<dbReference type="GO" id="GO:0009306">
    <property type="term" value="P:protein secretion"/>
    <property type="evidence" value="ECO:0007669"/>
    <property type="project" value="InterPro"/>
</dbReference>
<dbReference type="GO" id="GO:0099045">
    <property type="term" value="P:viral extrusion"/>
    <property type="evidence" value="ECO:0007669"/>
    <property type="project" value="UniProtKB-KW"/>
</dbReference>
<dbReference type="Gene3D" id="3.30.1370.120">
    <property type="match status" value="1"/>
</dbReference>
<dbReference type="Gene3D" id="3.55.50.30">
    <property type="match status" value="1"/>
</dbReference>
<dbReference type="InterPro" id="IPR050810">
    <property type="entry name" value="Bact_Secretion_Sys_Channel"/>
</dbReference>
<dbReference type="InterPro" id="IPR049371">
    <property type="entry name" value="GspD-like_N0"/>
</dbReference>
<dbReference type="InterPro" id="IPR001775">
    <property type="entry name" value="GspD/PilQ"/>
</dbReference>
<dbReference type="InterPro" id="IPR005644">
    <property type="entry name" value="NolW-like"/>
</dbReference>
<dbReference type="InterPro" id="IPR038591">
    <property type="entry name" value="NolW-like_sf"/>
</dbReference>
<dbReference type="InterPro" id="IPR004846">
    <property type="entry name" value="T2SS/T3SS_dom"/>
</dbReference>
<dbReference type="InterPro" id="IPR004845">
    <property type="entry name" value="T2SS_GspD_CS"/>
</dbReference>
<dbReference type="PANTHER" id="PTHR30332">
    <property type="entry name" value="PROBABLE GENERAL SECRETION PATHWAY PROTEIN D"/>
    <property type="match status" value="1"/>
</dbReference>
<dbReference type="PANTHER" id="PTHR30332:SF24">
    <property type="entry name" value="SECRETIN GSPD-RELATED"/>
    <property type="match status" value="1"/>
</dbReference>
<dbReference type="Pfam" id="PF00263">
    <property type="entry name" value="Secretin"/>
    <property type="match status" value="1"/>
</dbReference>
<dbReference type="Pfam" id="PF03958">
    <property type="entry name" value="Secretin_N"/>
    <property type="match status" value="1"/>
</dbReference>
<dbReference type="Pfam" id="PF21305">
    <property type="entry name" value="type_II_gspD_N0"/>
    <property type="match status" value="1"/>
</dbReference>
<dbReference type="PRINTS" id="PR00811">
    <property type="entry name" value="BCTERIALGSPD"/>
</dbReference>
<dbReference type="PRINTS" id="PR01032">
    <property type="entry name" value="PHAGEIV"/>
</dbReference>
<dbReference type="PROSITE" id="PS00875">
    <property type="entry name" value="T2SP_D"/>
    <property type="match status" value="1"/>
</dbReference>
<comment type="function">
    <text evidence="1">Acts in the assembly and extrusion of the bacteriophage by forming a channel across the host outer membrane. This channel is just large enough to allow a newly synthesized phage particle to pass through. Extrusion is a process of concomitant assembly and secretion and takes place at specific assembly sites where host inner and outer membranes are in close contacts (By similarity).</text>
</comment>
<comment type="subunit">
    <text evidence="1">Homomultimer. The channel is composed of 14 G4P subunits that confer a barrel-like structure. Interacts with G1P; this interaction results in a complex that spans the inner an outer host membranes (By similarity).</text>
</comment>
<comment type="subcellular location">
    <subcellularLocation>
        <location evidence="3">Host membrane</location>
        <topology evidence="3">Single-pass type I membrane protein</topology>
    </subcellularLocation>
</comment>
<comment type="similarity">
    <text evidence="3">Belongs to the inovirus G4P protein family.</text>
</comment>
<proteinExistence type="inferred from homology"/>
<name>G4P_BPM13</name>
<accession>P03665</accession>
<sequence length="426" mass="45865">MKLLNVINFVFLMFVSSSSFAQVIEMNNSPLRDFVTWYSKQSGESVIVSPDVKGTVTVYSSDVKPENLRNFFISVLRANNFDMVGSIPSIIQKYNPNNQDYIDELPSSDNQEYDDNSAPSGGFFVPQNDNVTQTFKINNVRAKDLIRVVELFVKSNTSKSSNVLSIDGSNLLVVSAPKDILDNLPQFLSTVDLPTDQILIEGLIFEVQQGDALDFSFAAGSQRGTVAGGVNTDRLTSVLSSAGGSFGIFNGDVLGLSVRALKTNSHSKILSVPRILTLSGQKGSISVGQNVPFITGRVTGESANVNNPFQTIERQNVGISMSVFPVAMAGGNIVLDITSKADSLSSSTQASDVITNQRSIATTVNLRDGQTLLLGGLTDYKNTSQDSGVPFLSKIPLIGLLFSSRSDSNEESTLYVLVKATIVRAL</sequence>
<feature type="signal peptide" evidence="2">
    <location>
        <begin position="1"/>
        <end position="21"/>
    </location>
</feature>
<feature type="chain" id="PRO_0000209453" description="Virion export protein">
    <location>
        <begin position="22"/>
        <end position="426"/>
    </location>
</feature>
<feature type="transmembrane region" description="Helical" evidence="2">
    <location>
        <begin position="317"/>
        <end position="337"/>
    </location>
</feature>